<sequence length="393" mass="42544">MSRKNYVFTSESVSEGHPDKLCDRISDAVLDAFIAEEPEARVAAETFATTNRVVIGGEVGLSDKDKLHDYMDRIEAIARACIKDIGYEQDKFHHATCQVTNLLHEQSAHIAQGVDAAKGKDEGAGDQGIMFGYASNETPELMPAPIHYAHAVLRRLAEVRKDGTEPTLRPDAKSQLSVRYEDGKPVGVTSVVLSTQHADESQTSDDIRAIVEPYIREVLPDGWITGDTEWWVNPTGTFVIGGPDGDAGLTGRKIIVDTYGGAAPHGGGAFSGKDPTKVDRSAAYVARYLAKNVVAAGLANKCTIQLSYAIGVSKPLSIYCDTFGTGEVDEEEIERAIGKVMDLTPRGIREHLHLNKPIYERTAAYGHFGRAPDADGGFSWEKTDLADVLKAAL</sequence>
<name>METK_ROSDO</name>
<keyword id="KW-0067">ATP-binding</keyword>
<keyword id="KW-0963">Cytoplasm</keyword>
<keyword id="KW-0460">Magnesium</keyword>
<keyword id="KW-0479">Metal-binding</keyword>
<keyword id="KW-0547">Nucleotide-binding</keyword>
<keyword id="KW-0554">One-carbon metabolism</keyword>
<keyword id="KW-0630">Potassium</keyword>
<keyword id="KW-1185">Reference proteome</keyword>
<keyword id="KW-0808">Transferase</keyword>
<accession>Q161H0</accession>
<proteinExistence type="inferred from homology"/>
<dbReference type="EC" id="2.5.1.6" evidence="1"/>
<dbReference type="EMBL" id="CP000362">
    <property type="protein sequence ID" value="ABG33373.1"/>
    <property type="molecule type" value="Genomic_DNA"/>
</dbReference>
<dbReference type="RefSeq" id="WP_011569984.1">
    <property type="nucleotide sequence ID" value="NC_008209.1"/>
</dbReference>
<dbReference type="SMR" id="Q161H0"/>
<dbReference type="STRING" id="375451.RD1_3916"/>
<dbReference type="KEGG" id="rde:RD1_3916"/>
<dbReference type="eggNOG" id="COG0192">
    <property type="taxonomic scope" value="Bacteria"/>
</dbReference>
<dbReference type="HOGENOM" id="CLU_041802_1_1_5"/>
<dbReference type="OrthoDB" id="9801686at2"/>
<dbReference type="UniPathway" id="UPA00315">
    <property type="reaction ID" value="UER00080"/>
</dbReference>
<dbReference type="Proteomes" id="UP000007029">
    <property type="component" value="Chromosome"/>
</dbReference>
<dbReference type="GO" id="GO:0005737">
    <property type="term" value="C:cytoplasm"/>
    <property type="evidence" value="ECO:0007669"/>
    <property type="project" value="UniProtKB-SubCell"/>
</dbReference>
<dbReference type="GO" id="GO:0005524">
    <property type="term" value="F:ATP binding"/>
    <property type="evidence" value="ECO:0007669"/>
    <property type="project" value="UniProtKB-UniRule"/>
</dbReference>
<dbReference type="GO" id="GO:0000287">
    <property type="term" value="F:magnesium ion binding"/>
    <property type="evidence" value="ECO:0007669"/>
    <property type="project" value="UniProtKB-UniRule"/>
</dbReference>
<dbReference type="GO" id="GO:0004478">
    <property type="term" value="F:methionine adenosyltransferase activity"/>
    <property type="evidence" value="ECO:0007669"/>
    <property type="project" value="UniProtKB-UniRule"/>
</dbReference>
<dbReference type="GO" id="GO:0006730">
    <property type="term" value="P:one-carbon metabolic process"/>
    <property type="evidence" value="ECO:0007669"/>
    <property type="project" value="UniProtKB-KW"/>
</dbReference>
<dbReference type="GO" id="GO:0006556">
    <property type="term" value="P:S-adenosylmethionine biosynthetic process"/>
    <property type="evidence" value="ECO:0007669"/>
    <property type="project" value="UniProtKB-UniRule"/>
</dbReference>
<dbReference type="CDD" id="cd18079">
    <property type="entry name" value="S-AdoMet_synt"/>
    <property type="match status" value="1"/>
</dbReference>
<dbReference type="FunFam" id="3.30.300.10:FF:000003">
    <property type="entry name" value="S-adenosylmethionine synthase"/>
    <property type="match status" value="1"/>
</dbReference>
<dbReference type="Gene3D" id="3.30.300.10">
    <property type="match status" value="3"/>
</dbReference>
<dbReference type="HAMAP" id="MF_00086">
    <property type="entry name" value="S_AdoMet_synth1"/>
    <property type="match status" value="1"/>
</dbReference>
<dbReference type="InterPro" id="IPR022631">
    <property type="entry name" value="ADOMET_SYNTHASE_CS"/>
</dbReference>
<dbReference type="InterPro" id="IPR022630">
    <property type="entry name" value="S-AdoMet_synt_C"/>
</dbReference>
<dbReference type="InterPro" id="IPR022629">
    <property type="entry name" value="S-AdoMet_synt_central"/>
</dbReference>
<dbReference type="InterPro" id="IPR022628">
    <property type="entry name" value="S-AdoMet_synt_N"/>
</dbReference>
<dbReference type="InterPro" id="IPR002133">
    <property type="entry name" value="S-AdoMet_synthetase"/>
</dbReference>
<dbReference type="InterPro" id="IPR022636">
    <property type="entry name" value="S-AdoMet_synthetase_sfam"/>
</dbReference>
<dbReference type="NCBIfam" id="TIGR01034">
    <property type="entry name" value="metK"/>
    <property type="match status" value="1"/>
</dbReference>
<dbReference type="PANTHER" id="PTHR11964">
    <property type="entry name" value="S-ADENOSYLMETHIONINE SYNTHETASE"/>
    <property type="match status" value="1"/>
</dbReference>
<dbReference type="Pfam" id="PF02773">
    <property type="entry name" value="S-AdoMet_synt_C"/>
    <property type="match status" value="1"/>
</dbReference>
<dbReference type="Pfam" id="PF02772">
    <property type="entry name" value="S-AdoMet_synt_M"/>
    <property type="match status" value="1"/>
</dbReference>
<dbReference type="Pfam" id="PF00438">
    <property type="entry name" value="S-AdoMet_synt_N"/>
    <property type="match status" value="1"/>
</dbReference>
<dbReference type="PIRSF" id="PIRSF000497">
    <property type="entry name" value="MAT"/>
    <property type="match status" value="1"/>
</dbReference>
<dbReference type="SUPFAM" id="SSF55973">
    <property type="entry name" value="S-adenosylmethionine synthetase"/>
    <property type="match status" value="3"/>
</dbReference>
<dbReference type="PROSITE" id="PS00376">
    <property type="entry name" value="ADOMET_SYNTHASE_1"/>
    <property type="match status" value="1"/>
</dbReference>
<dbReference type="PROSITE" id="PS00377">
    <property type="entry name" value="ADOMET_SYNTHASE_2"/>
    <property type="match status" value="1"/>
</dbReference>
<gene>
    <name evidence="1" type="primary">metK</name>
    <name type="ordered locus">RD1_3916</name>
</gene>
<comment type="function">
    <text evidence="1">Catalyzes the formation of S-adenosylmethionine (AdoMet) from methionine and ATP. The overall synthetic reaction is composed of two sequential steps, AdoMet formation and the subsequent tripolyphosphate hydrolysis which occurs prior to release of AdoMet from the enzyme.</text>
</comment>
<comment type="catalytic activity">
    <reaction evidence="1">
        <text>L-methionine + ATP + H2O = S-adenosyl-L-methionine + phosphate + diphosphate</text>
        <dbReference type="Rhea" id="RHEA:21080"/>
        <dbReference type="ChEBI" id="CHEBI:15377"/>
        <dbReference type="ChEBI" id="CHEBI:30616"/>
        <dbReference type="ChEBI" id="CHEBI:33019"/>
        <dbReference type="ChEBI" id="CHEBI:43474"/>
        <dbReference type="ChEBI" id="CHEBI:57844"/>
        <dbReference type="ChEBI" id="CHEBI:59789"/>
        <dbReference type="EC" id="2.5.1.6"/>
    </reaction>
</comment>
<comment type="cofactor">
    <cofactor evidence="1">
        <name>Mg(2+)</name>
        <dbReference type="ChEBI" id="CHEBI:18420"/>
    </cofactor>
    <text evidence="1">Binds 2 divalent ions per subunit.</text>
</comment>
<comment type="cofactor">
    <cofactor evidence="1">
        <name>K(+)</name>
        <dbReference type="ChEBI" id="CHEBI:29103"/>
    </cofactor>
    <text evidence="1">Binds 1 potassium ion per subunit.</text>
</comment>
<comment type="pathway">
    <text evidence="1">Amino-acid biosynthesis; S-adenosyl-L-methionine biosynthesis; S-adenosyl-L-methionine from L-methionine: step 1/1.</text>
</comment>
<comment type="subunit">
    <text evidence="1">Homotetramer; dimer of dimers.</text>
</comment>
<comment type="subcellular location">
    <subcellularLocation>
        <location evidence="1">Cytoplasm</location>
    </subcellularLocation>
</comment>
<comment type="similarity">
    <text evidence="1">Belongs to the AdoMet synthase family.</text>
</comment>
<protein>
    <recommendedName>
        <fullName evidence="1">S-adenosylmethionine synthase</fullName>
        <shortName evidence="1">AdoMet synthase</shortName>
        <ecNumber evidence="1">2.5.1.6</ecNumber>
    </recommendedName>
    <alternativeName>
        <fullName evidence="1">MAT</fullName>
    </alternativeName>
    <alternativeName>
        <fullName evidence="1">Methionine adenosyltransferase</fullName>
    </alternativeName>
</protein>
<reference key="1">
    <citation type="journal article" date="2007" name="J. Bacteriol.">
        <title>The complete genome sequence of Roseobacter denitrificans reveals a mixotrophic rather than photosynthetic metabolism.</title>
        <authorList>
            <person name="Swingley W.D."/>
            <person name="Sadekar S."/>
            <person name="Mastrian S.D."/>
            <person name="Matthies H.J."/>
            <person name="Hao J."/>
            <person name="Ramos H."/>
            <person name="Acharya C.R."/>
            <person name="Conrad A.L."/>
            <person name="Taylor H.L."/>
            <person name="Dejesa L.C."/>
            <person name="Shah M.K."/>
            <person name="O'Huallachain M.E."/>
            <person name="Lince M.T."/>
            <person name="Blankenship R.E."/>
            <person name="Beatty J.T."/>
            <person name="Touchman J.W."/>
        </authorList>
    </citation>
    <scope>NUCLEOTIDE SEQUENCE [LARGE SCALE GENOMIC DNA]</scope>
    <source>
        <strain>ATCC 33942 / OCh 114</strain>
    </source>
</reference>
<feature type="chain" id="PRO_0000302973" description="S-adenosylmethionine synthase">
    <location>
        <begin position="1"/>
        <end position="393"/>
    </location>
</feature>
<feature type="region of interest" description="Flexible loop" evidence="1">
    <location>
        <begin position="106"/>
        <end position="116"/>
    </location>
</feature>
<feature type="binding site" description="in other chain" evidence="1">
    <location>
        <position position="17"/>
    </location>
    <ligand>
        <name>ATP</name>
        <dbReference type="ChEBI" id="CHEBI:30616"/>
        <note>ligand shared between two neighboring subunits</note>
    </ligand>
</feature>
<feature type="binding site" evidence="1">
    <location>
        <position position="19"/>
    </location>
    <ligand>
        <name>Mg(2+)</name>
        <dbReference type="ChEBI" id="CHEBI:18420"/>
    </ligand>
</feature>
<feature type="binding site" evidence="1">
    <location>
        <position position="45"/>
    </location>
    <ligand>
        <name>K(+)</name>
        <dbReference type="ChEBI" id="CHEBI:29103"/>
    </ligand>
</feature>
<feature type="binding site" description="in other chain" evidence="1">
    <location>
        <position position="58"/>
    </location>
    <ligand>
        <name>L-methionine</name>
        <dbReference type="ChEBI" id="CHEBI:57844"/>
        <note>ligand shared between two neighboring subunits</note>
    </ligand>
</feature>
<feature type="binding site" description="in other chain" evidence="1">
    <location>
        <position position="106"/>
    </location>
    <ligand>
        <name>L-methionine</name>
        <dbReference type="ChEBI" id="CHEBI:57844"/>
        <note>ligand shared between two neighboring subunits</note>
    </ligand>
</feature>
<feature type="binding site" description="in other chain" evidence="1">
    <location>
        <begin position="171"/>
        <end position="173"/>
    </location>
    <ligand>
        <name>ATP</name>
        <dbReference type="ChEBI" id="CHEBI:30616"/>
        <note>ligand shared between two neighboring subunits</note>
    </ligand>
</feature>
<feature type="binding site" evidence="1">
    <location>
        <position position="246"/>
    </location>
    <ligand>
        <name>ATP</name>
        <dbReference type="ChEBI" id="CHEBI:30616"/>
        <note>ligand shared between two neighboring subunits</note>
    </ligand>
</feature>
<feature type="binding site" evidence="1">
    <location>
        <position position="246"/>
    </location>
    <ligand>
        <name>L-methionine</name>
        <dbReference type="ChEBI" id="CHEBI:57844"/>
        <note>ligand shared between two neighboring subunits</note>
    </ligand>
</feature>
<feature type="binding site" description="in other chain" evidence="1">
    <location>
        <begin position="252"/>
        <end position="253"/>
    </location>
    <ligand>
        <name>ATP</name>
        <dbReference type="ChEBI" id="CHEBI:30616"/>
        <note>ligand shared between two neighboring subunits</note>
    </ligand>
</feature>
<feature type="binding site" evidence="1">
    <location>
        <position position="269"/>
    </location>
    <ligand>
        <name>ATP</name>
        <dbReference type="ChEBI" id="CHEBI:30616"/>
        <note>ligand shared between two neighboring subunits</note>
    </ligand>
</feature>
<feature type="binding site" evidence="1">
    <location>
        <position position="273"/>
    </location>
    <ligand>
        <name>ATP</name>
        <dbReference type="ChEBI" id="CHEBI:30616"/>
        <note>ligand shared between two neighboring subunits</note>
    </ligand>
</feature>
<feature type="binding site" description="in other chain" evidence="1">
    <location>
        <position position="277"/>
    </location>
    <ligand>
        <name>L-methionine</name>
        <dbReference type="ChEBI" id="CHEBI:57844"/>
        <note>ligand shared between two neighboring subunits</note>
    </ligand>
</feature>
<organism>
    <name type="scientific">Roseobacter denitrificans (strain ATCC 33942 / OCh 114)</name>
    <name type="common">Erythrobacter sp. (strain OCh 114)</name>
    <name type="synonym">Roseobacter denitrificans</name>
    <dbReference type="NCBI Taxonomy" id="375451"/>
    <lineage>
        <taxon>Bacteria</taxon>
        <taxon>Pseudomonadati</taxon>
        <taxon>Pseudomonadota</taxon>
        <taxon>Alphaproteobacteria</taxon>
        <taxon>Rhodobacterales</taxon>
        <taxon>Roseobacteraceae</taxon>
        <taxon>Roseobacter</taxon>
    </lineage>
</organism>
<evidence type="ECO:0000255" key="1">
    <source>
        <dbReference type="HAMAP-Rule" id="MF_00086"/>
    </source>
</evidence>